<accession>Q5HII3</accession>
<name>RSMA_STAAC</name>
<feature type="chain" id="PRO_0000101603" description="Ribosomal RNA small subunit methyltransferase A">
    <location>
        <begin position="1"/>
        <end position="297"/>
    </location>
</feature>
<feature type="binding site" evidence="1">
    <location>
        <position position="31"/>
    </location>
    <ligand>
        <name>S-adenosyl-L-methionine</name>
        <dbReference type="ChEBI" id="CHEBI:59789"/>
    </ligand>
</feature>
<feature type="binding site" evidence="1">
    <location>
        <position position="33"/>
    </location>
    <ligand>
        <name>S-adenosyl-L-methionine</name>
        <dbReference type="ChEBI" id="CHEBI:59789"/>
    </ligand>
</feature>
<feature type="binding site" evidence="1">
    <location>
        <position position="58"/>
    </location>
    <ligand>
        <name>S-adenosyl-L-methionine</name>
        <dbReference type="ChEBI" id="CHEBI:59789"/>
    </ligand>
</feature>
<feature type="binding site" evidence="1">
    <location>
        <position position="79"/>
    </location>
    <ligand>
        <name>S-adenosyl-L-methionine</name>
        <dbReference type="ChEBI" id="CHEBI:59789"/>
    </ligand>
</feature>
<feature type="binding site" evidence="1">
    <location>
        <position position="104"/>
    </location>
    <ligand>
        <name>S-adenosyl-L-methionine</name>
        <dbReference type="ChEBI" id="CHEBI:59789"/>
    </ligand>
</feature>
<feature type="binding site" evidence="1">
    <location>
        <position position="129"/>
    </location>
    <ligand>
        <name>S-adenosyl-L-methionine</name>
        <dbReference type="ChEBI" id="CHEBI:59789"/>
    </ligand>
</feature>
<proteinExistence type="inferred from homology"/>
<reference key="1">
    <citation type="journal article" date="2005" name="J. Bacteriol.">
        <title>Insights on evolution of virulence and resistance from the complete genome analysis of an early methicillin-resistant Staphylococcus aureus strain and a biofilm-producing methicillin-resistant Staphylococcus epidermidis strain.</title>
        <authorList>
            <person name="Gill S.R."/>
            <person name="Fouts D.E."/>
            <person name="Archer G.L."/>
            <person name="Mongodin E.F."/>
            <person name="DeBoy R.T."/>
            <person name="Ravel J."/>
            <person name="Paulsen I.T."/>
            <person name="Kolonay J.F."/>
            <person name="Brinkac L.M."/>
            <person name="Beanan M.J."/>
            <person name="Dodson R.J."/>
            <person name="Daugherty S.C."/>
            <person name="Madupu R."/>
            <person name="Angiuoli S.V."/>
            <person name="Durkin A.S."/>
            <person name="Haft D.H."/>
            <person name="Vamathevan J.J."/>
            <person name="Khouri H."/>
            <person name="Utterback T.R."/>
            <person name="Lee C."/>
            <person name="Dimitrov G."/>
            <person name="Jiang L."/>
            <person name="Qin H."/>
            <person name="Weidman J."/>
            <person name="Tran K."/>
            <person name="Kang K.H."/>
            <person name="Hance I.R."/>
            <person name="Nelson K.E."/>
            <person name="Fraser C.M."/>
        </authorList>
    </citation>
    <scope>NUCLEOTIDE SEQUENCE [LARGE SCALE GENOMIC DNA]</scope>
    <source>
        <strain>COL</strain>
    </source>
</reference>
<sequence length="297" mass="33738">MLDNKDIATPSRTRALLDKYGFNFKKSLGQNFLIDVNIINNIIDASDIDAQTGVIEIGPGMGSLTEQLARHAKRVLAFEIDQRLIPVLNDTLSPYDNVTVINEDILKANIKEAVENHLQDCEKIMVVANLPYYITTPILLNLMQQDIPIDGYVVMMQKEVGERLNAEVGSKAYGSLSIVVQYYTETSKVLTVPKSVFMPPPNVDSIVVKLMQRTEPLVTVDNEEAFFKLAKAAFAQRRKTINNNYQNYFKDGKQHKEVILQWLEQAGIDPRRRGETLSIQDFAKLYEEKKKFPQLEN</sequence>
<comment type="function">
    <text evidence="1">Specifically dimethylates two adjacent adenosines (A1518 and A1519) in the loop of a conserved hairpin near the 3'-end of 16S rRNA in the 30S particle. May play a critical role in biogenesis of 30S subunits.</text>
</comment>
<comment type="catalytic activity">
    <reaction evidence="1">
        <text>adenosine(1518)/adenosine(1519) in 16S rRNA + 4 S-adenosyl-L-methionine = N(6)-dimethyladenosine(1518)/N(6)-dimethyladenosine(1519) in 16S rRNA + 4 S-adenosyl-L-homocysteine + 4 H(+)</text>
        <dbReference type="Rhea" id="RHEA:19609"/>
        <dbReference type="Rhea" id="RHEA-COMP:10232"/>
        <dbReference type="Rhea" id="RHEA-COMP:10233"/>
        <dbReference type="ChEBI" id="CHEBI:15378"/>
        <dbReference type="ChEBI" id="CHEBI:57856"/>
        <dbReference type="ChEBI" id="CHEBI:59789"/>
        <dbReference type="ChEBI" id="CHEBI:74411"/>
        <dbReference type="ChEBI" id="CHEBI:74493"/>
        <dbReference type="EC" id="2.1.1.182"/>
    </reaction>
</comment>
<comment type="subcellular location">
    <subcellularLocation>
        <location evidence="1">Cytoplasm</location>
    </subcellularLocation>
</comment>
<comment type="similarity">
    <text evidence="1">Belongs to the class I-like SAM-binding methyltransferase superfamily. rRNA adenine N(6)-methyltransferase family. RsmA subfamily.</text>
</comment>
<evidence type="ECO:0000255" key="1">
    <source>
        <dbReference type="HAMAP-Rule" id="MF_00607"/>
    </source>
</evidence>
<gene>
    <name evidence="1" type="primary">rsmA</name>
    <name evidence="1" type="synonym">ksgA</name>
    <name type="ordered locus">SACOL0536</name>
</gene>
<keyword id="KW-0963">Cytoplasm</keyword>
<keyword id="KW-0489">Methyltransferase</keyword>
<keyword id="KW-0694">RNA-binding</keyword>
<keyword id="KW-0698">rRNA processing</keyword>
<keyword id="KW-0949">S-adenosyl-L-methionine</keyword>
<keyword id="KW-0808">Transferase</keyword>
<protein>
    <recommendedName>
        <fullName evidence="1">Ribosomal RNA small subunit methyltransferase A</fullName>
        <ecNumber evidence="1">2.1.1.182</ecNumber>
    </recommendedName>
    <alternativeName>
        <fullName evidence="1">16S rRNA (adenine(1518)-N(6)/adenine(1519)-N(6))-dimethyltransferase</fullName>
    </alternativeName>
    <alternativeName>
        <fullName evidence="1">16S rRNA dimethyladenosine transferase</fullName>
    </alternativeName>
    <alternativeName>
        <fullName evidence="1">16S rRNA dimethylase</fullName>
    </alternativeName>
    <alternativeName>
        <fullName evidence="1">S-adenosylmethionine-6-N', N'-adenosyl(rRNA) dimethyltransferase</fullName>
    </alternativeName>
</protein>
<dbReference type="EC" id="2.1.1.182" evidence="1"/>
<dbReference type="EMBL" id="CP000046">
    <property type="protein sequence ID" value="AAW37655.1"/>
    <property type="molecule type" value="Genomic_DNA"/>
</dbReference>
<dbReference type="RefSeq" id="WP_000886500.1">
    <property type="nucleotide sequence ID" value="NZ_JBGOFO010000012.1"/>
</dbReference>
<dbReference type="SMR" id="Q5HII3"/>
<dbReference type="KEGG" id="sac:SACOL0536"/>
<dbReference type="HOGENOM" id="CLU_041220_0_0_9"/>
<dbReference type="Proteomes" id="UP000000530">
    <property type="component" value="Chromosome"/>
</dbReference>
<dbReference type="GO" id="GO:0005829">
    <property type="term" value="C:cytosol"/>
    <property type="evidence" value="ECO:0007669"/>
    <property type="project" value="TreeGrafter"/>
</dbReference>
<dbReference type="GO" id="GO:0052908">
    <property type="term" value="F:16S rRNA (adenine(1518)-N(6)/adenine(1519)-N(6))-dimethyltransferase activity"/>
    <property type="evidence" value="ECO:0007669"/>
    <property type="project" value="UniProtKB-EC"/>
</dbReference>
<dbReference type="GO" id="GO:0003723">
    <property type="term" value="F:RNA binding"/>
    <property type="evidence" value="ECO:0007669"/>
    <property type="project" value="UniProtKB-KW"/>
</dbReference>
<dbReference type="CDD" id="cd02440">
    <property type="entry name" value="AdoMet_MTases"/>
    <property type="match status" value="1"/>
</dbReference>
<dbReference type="FunFam" id="1.10.8.100:FF:000002">
    <property type="entry name" value="Ribosomal RNA small subunit methyltransferase A"/>
    <property type="match status" value="1"/>
</dbReference>
<dbReference type="FunFam" id="3.40.50.150:FF:000023">
    <property type="entry name" value="Ribosomal RNA small subunit methyltransferase A"/>
    <property type="match status" value="1"/>
</dbReference>
<dbReference type="Gene3D" id="1.10.8.100">
    <property type="entry name" value="Ribosomal RNA adenine dimethylase-like, domain 2"/>
    <property type="match status" value="1"/>
</dbReference>
<dbReference type="Gene3D" id="3.40.50.150">
    <property type="entry name" value="Vaccinia Virus protein VP39"/>
    <property type="match status" value="1"/>
</dbReference>
<dbReference type="HAMAP" id="MF_00607">
    <property type="entry name" value="16SrRNA_methyltr_A"/>
    <property type="match status" value="1"/>
</dbReference>
<dbReference type="InterPro" id="IPR001737">
    <property type="entry name" value="KsgA/Erm"/>
</dbReference>
<dbReference type="InterPro" id="IPR023165">
    <property type="entry name" value="rRNA_Ade_diMease-like_C"/>
</dbReference>
<dbReference type="InterPro" id="IPR020596">
    <property type="entry name" value="rRNA_Ade_Mease_Trfase_CS"/>
</dbReference>
<dbReference type="InterPro" id="IPR020598">
    <property type="entry name" value="rRNA_Ade_methylase_Trfase_N"/>
</dbReference>
<dbReference type="InterPro" id="IPR011530">
    <property type="entry name" value="rRNA_adenine_dimethylase"/>
</dbReference>
<dbReference type="InterPro" id="IPR029063">
    <property type="entry name" value="SAM-dependent_MTases_sf"/>
</dbReference>
<dbReference type="NCBIfam" id="TIGR00755">
    <property type="entry name" value="ksgA"/>
    <property type="match status" value="1"/>
</dbReference>
<dbReference type="PANTHER" id="PTHR11727">
    <property type="entry name" value="DIMETHYLADENOSINE TRANSFERASE"/>
    <property type="match status" value="1"/>
</dbReference>
<dbReference type="PANTHER" id="PTHR11727:SF7">
    <property type="entry name" value="DIMETHYLADENOSINE TRANSFERASE-RELATED"/>
    <property type="match status" value="1"/>
</dbReference>
<dbReference type="Pfam" id="PF00398">
    <property type="entry name" value="RrnaAD"/>
    <property type="match status" value="1"/>
</dbReference>
<dbReference type="SMART" id="SM00650">
    <property type="entry name" value="rADc"/>
    <property type="match status" value="1"/>
</dbReference>
<dbReference type="SUPFAM" id="SSF53335">
    <property type="entry name" value="S-adenosyl-L-methionine-dependent methyltransferases"/>
    <property type="match status" value="1"/>
</dbReference>
<dbReference type="PROSITE" id="PS01131">
    <property type="entry name" value="RRNA_A_DIMETH"/>
    <property type="match status" value="1"/>
</dbReference>
<dbReference type="PROSITE" id="PS51689">
    <property type="entry name" value="SAM_RNA_A_N6_MT"/>
    <property type="match status" value="1"/>
</dbReference>
<organism>
    <name type="scientific">Staphylococcus aureus (strain COL)</name>
    <dbReference type="NCBI Taxonomy" id="93062"/>
    <lineage>
        <taxon>Bacteria</taxon>
        <taxon>Bacillati</taxon>
        <taxon>Bacillota</taxon>
        <taxon>Bacilli</taxon>
        <taxon>Bacillales</taxon>
        <taxon>Staphylococcaceae</taxon>
        <taxon>Staphylococcus</taxon>
    </lineage>
</organism>